<organism>
    <name type="scientific">Myxococcus xanthus (strain DK1622)</name>
    <dbReference type="NCBI Taxonomy" id="246197"/>
    <lineage>
        <taxon>Bacteria</taxon>
        <taxon>Pseudomonadati</taxon>
        <taxon>Myxococcota</taxon>
        <taxon>Myxococcia</taxon>
        <taxon>Myxococcales</taxon>
        <taxon>Cystobacterineae</taxon>
        <taxon>Myxococcaceae</taxon>
        <taxon>Myxococcus</taxon>
    </lineage>
</organism>
<reference key="1">
    <citation type="journal article" date="2006" name="Proc. Natl. Acad. Sci. U.S.A.">
        <title>Evolution of sensory complexity recorded in a myxobacterial genome.</title>
        <authorList>
            <person name="Goldman B.S."/>
            <person name="Nierman W.C."/>
            <person name="Kaiser D."/>
            <person name="Slater S.C."/>
            <person name="Durkin A.S."/>
            <person name="Eisen J.A."/>
            <person name="Ronning C.M."/>
            <person name="Barbazuk W.B."/>
            <person name="Blanchard M."/>
            <person name="Field C."/>
            <person name="Halling C."/>
            <person name="Hinkle G."/>
            <person name="Iartchuk O."/>
            <person name="Kim H.S."/>
            <person name="Mackenzie C."/>
            <person name="Madupu R."/>
            <person name="Miller N."/>
            <person name="Shvartsbeyn A."/>
            <person name="Sullivan S.A."/>
            <person name="Vaudin M."/>
            <person name="Wiegand R."/>
            <person name="Kaplan H.B."/>
        </authorList>
    </citation>
    <scope>NUCLEOTIDE SEQUENCE [LARGE SCALE GENOMIC DNA]</scope>
    <source>
        <strain>DK1622</strain>
    </source>
</reference>
<gene>
    <name evidence="1" type="primary">rpsD1</name>
    <name type="ordered locus">MXAN_3325</name>
</gene>
<dbReference type="EMBL" id="CP000113">
    <property type="protein sequence ID" value="ABF87729.1"/>
    <property type="molecule type" value="Genomic_DNA"/>
</dbReference>
<dbReference type="RefSeq" id="WP_011553360.1">
    <property type="nucleotide sequence ID" value="NC_008095.1"/>
</dbReference>
<dbReference type="SMR" id="Q1D749"/>
<dbReference type="STRING" id="246197.MXAN_3325"/>
<dbReference type="EnsemblBacteria" id="ABF87729">
    <property type="protein sequence ID" value="ABF87729"/>
    <property type="gene ID" value="MXAN_3325"/>
</dbReference>
<dbReference type="GeneID" id="41360678"/>
<dbReference type="KEGG" id="mxa:MXAN_3325"/>
<dbReference type="eggNOG" id="COG0522">
    <property type="taxonomic scope" value="Bacteria"/>
</dbReference>
<dbReference type="HOGENOM" id="CLU_092403_0_2_7"/>
<dbReference type="OrthoDB" id="9803672at2"/>
<dbReference type="Proteomes" id="UP000002402">
    <property type="component" value="Chromosome"/>
</dbReference>
<dbReference type="GO" id="GO:0015935">
    <property type="term" value="C:small ribosomal subunit"/>
    <property type="evidence" value="ECO:0007669"/>
    <property type="project" value="InterPro"/>
</dbReference>
<dbReference type="GO" id="GO:0019843">
    <property type="term" value="F:rRNA binding"/>
    <property type="evidence" value="ECO:0007669"/>
    <property type="project" value="UniProtKB-UniRule"/>
</dbReference>
<dbReference type="GO" id="GO:0003735">
    <property type="term" value="F:structural constituent of ribosome"/>
    <property type="evidence" value="ECO:0007669"/>
    <property type="project" value="InterPro"/>
</dbReference>
<dbReference type="GO" id="GO:0042274">
    <property type="term" value="P:ribosomal small subunit biogenesis"/>
    <property type="evidence" value="ECO:0007669"/>
    <property type="project" value="TreeGrafter"/>
</dbReference>
<dbReference type="GO" id="GO:0006412">
    <property type="term" value="P:translation"/>
    <property type="evidence" value="ECO:0007669"/>
    <property type="project" value="UniProtKB-UniRule"/>
</dbReference>
<dbReference type="CDD" id="cd00165">
    <property type="entry name" value="S4"/>
    <property type="match status" value="1"/>
</dbReference>
<dbReference type="FunFam" id="1.10.1050.10:FF:000001">
    <property type="entry name" value="30S ribosomal protein S4"/>
    <property type="match status" value="1"/>
</dbReference>
<dbReference type="FunFam" id="3.10.290.10:FF:000001">
    <property type="entry name" value="30S ribosomal protein S4"/>
    <property type="match status" value="1"/>
</dbReference>
<dbReference type="Gene3D" id="1.10.1050.10">
    <property type="entry name" value="Ribosomal Protein S4 Delta 41, Chain A, domain 1"/>
    <property type="match status" value="1"/>
</dbReference>
<dbReference type="Gene3D" id="3.10.290.10">
    <property type="entry name" value="RNA-binding S4 domain"/>
    <property type="match status" value="1"/>
</dbReference>
<dbReference type="HAMAP" id="MF_01306_B">
    <property type="entry name" value="Ribosomal_uS4_B"/>
    <property type="match status" value="1"/>
</dbReference>
<dbReference type="InterPro" id="IPR022801">
    <property type="entry name" value="Ribosomal_uS4"/>
</dbReference>
<dbReference type="InterPro" id="IPR005709">
    <property type="entry name" value="Ribosomal_uS4_bac-type"/>
</dbReference>
<dbReference type="InterPro" id="IPR018079">
    <property type="entry name" value="Ribosomal_uS4_CS"/>
</dbReference>
<dbReference type="InterPro" id="IPR001912">
    <property type="entry name" value="Ribosomal_uS4_N"/>
</dbReference>
<dbReference type="InterPro" id="IPR002942">
    <property type="entry name" value="S4_RNA-bd"/>
</dbReference>
<dbReference type="InterPro" id="IPR036986">
    <property type="entry name" value="S4_RNA-bd_sf"/>
</dbReference>
<dbReference type="NCBIfam" id="NF003717">
    <property type="entry name" value="PRK05327.1"/>
    <property type="match status" value="1"/>
</dbReference>
<dbReference type="NCBIfam" id="TIGR01017">
    <property type="entry name" value="rpsD_bact"/>
    <property type="match status" value="1"/>
</dbReference>
<dbReference type="PANTHER" id="PTHR11831">
    <property type="entry name" value="30S 40S RIBOSOMAL PROTEIN"/>
    <property type="match status" value="1"/>
</dbReference>
<dbReference type="PANTHER" id="PTHR11831:SF4">
    <property type="entry name" value="SMALL RIBOSOMAL SUBUNIT PROTEIN US4M"/>
    <property type="match status" value="1"/>
</dbReference>
<dbReference type="Pfam" id="PF00163">
    <property type="entry name" value="Ribosomal_S4"/>
    <property type="match status" value="1"/>
</dbReference>
<dbReference type="Pfam" id="PF01479">
    <property type="entry name" value="S4"/>
    <property type="match status" value="1"/>
</dbReference>
<dbReference type="SMART" id="SM01390">
    <property type="entry name" value="Ribosomal_S4"/>
    <property type="match status" value="1"/>
</dbReference>
<dbReference type="SMART" id="SM00363">
    <property type="entry name" value="S4"/>
    <property type="match status" value="1"/>
</dbReference>
<dbReference type="SUPFAM" id="SSF55174">
    <property type="entry name" value="Alpha-L RNA-binding motif"/>
    <property type="match status" value="1"/>
</dbReference>
<dbReference type="PROSITE" id="PS00632">
    <property type="entry name" value="RIBOSOMAL_S4"/>
    <property type="match status" value="1"/>
</dbReference>
<dbReference type="PROSITE" id="PS50889">
    <property type="entry name" value="S4"/>
    <property type="match status" value="1"/>
</dbReference>
<comment type="function">
    <text evidence="1">One of the primary rRNA binding proteins, it binds directly to 16S rRNA where it nucleates assembly of the body of the 30S subunit.</text>
</comment>
<comment type="function">
    <text evidence="1">With S5 and S12 plays an important role in translational accuracy.</text>
</comment>
<comment type="subunit">
    <text evidence="1">Part of the 30S ribosomal subunit. Contacts protein S5. The interaction surface between S4 and S5 is involved in control of translational fidelity.</text>
</comment>
<comment type="similarity">
    <text evidence="1">Belongs to the universal ribosomal protein uS4 family.</text>
</comment>
<keyword id="KW-1185">Reference proteome</keyword>
<keyword id="KW-0687">Ribonucleoprotein</keyword>
<keyword id="KW-0689">Ribosomal protein</keyword>
<keyword id="KW-0694">RNA-binding</keyword>
<keyword id="KW-0699">rRNA-binding</keyword>
<proteinExistence type="inferred from homology"/>
<feature type="chain" id="PRO_0000293321" description="Small ribosomal subunit protein uS4A">
    <location>
        <begin position="1"/>
        <end position="208"/>
    </location>
</feature>
<feature type="domain" description="S4 RNA-binding" evidence="1">
    <location>
        <begin position="98"/>
        <end position="161"/>
    </location>
</feature>
<name>RS4A_MYXXD</name>
<sequence length="208" mass="23936">MARYTASACRICRRENLKMYLKGDRCYTDKCAIERRPYPPGQHGQGRVKFSGYGVQLREKQKVKRMYGLLENQFRGYYHRASAAKGKTGDNLLQQLELRLDNVVFRMGFADTRNEARQLVRHGHFQVNGRKVNIPSFAVKPGTAVEVVEKSRKVLRISEALETVDRRGIPQWISLDKKAFKGTVTTVPNREDLTMPISEQLIVELYSK</sequence>
<accession>Q1D749</accession>
<evidence type="ECO:0000255" key="1">
    <source>
        <dbReference type="HAMAP-Rule" id="MF_01306"/>
    </source>
</evidence>
<evidence type="ECO:0000305" key="2"/>
<protein>
    <recommendedName>
        <fullName evidence="1">Small ribosomal subunit protein uS4A</fullName>
    </recommendedName>
    <alternativeName>
        <fullName evidence="2">30S ribosomal protein S4 1</fullName>
    </alternativeName>
</protein>